<protein>
    <recommendedName>
        <fullName evidence="1">Pyrimidine-specific ribonucleoside hydrolase RihB</fullName>
        <ecNumber evidence="1">3.2.2.8</ecNumber>
    </recommendedName>
    <alternativeName>
        <fullName evidence="1">Cytidine/uridine-specific hydrolase</fullName>
    </alternativeName>
</protein>
<reference key="1">
    <citation type="journal article" date="2009" name="J. Bacteriol.">
        <title>Genomic sequencing reveals regulatory mutations and recombinational events in the widely used MC4100 lineage of Escherichia coli K-12.</title>
        <authorList>
            <person name="Ferenci T."/>
            <person name="Zhou Z."/>
            <person name="Betteridge T."/>
            <person name="Ren Y."/>
            <person name="Liu Y."/>
            <person name="Feng L."/>
            <person name="Reeves P.R."/>
            <person name="Wang L."/>
        </authorList>
    </citation>
    <scope>NUCLEOTIDE SEQUENCE [LARGE SCALE GENOMIC DNA]</scope>
    <source>
        <strain>K12 / MC4100 / BW2952</strain>
    </source>
</reference>
<gene>
    <name evidence="1" type="primary">rihB</name>
    <name type="ordered locus">BWG_1944</name>
</gene>
<sequence length="313" mass="33748">MEKRKIILDCDPGHDDAIAIMMAAKHPAIDLLGITIVAGNQTLDKTLINGLNVCQKLEINVPVYAGMPQPIMRQQIVADNIHGETGLDGPVFEPLTRQAESTHAVKYIIDTLMASDGDITLVPVGPLSNIAVAMRMQPAILPKIREIVLMGGAYGTGNFTPSAEFNIFADPEAARVVFTSGVPLVMMGLDLTNQTVCTPDVIARMERAGGPAGELFSDIMNFTLKTQFENYGLAGGPVHDATCIGYLINPDGIKTQEMYVEVDVNSGPCYGRTVCDELGVLGKPANTKVGITIDTDWFWGLVEECVRGYIKTH</sequence>
<evidence type="ECO:0000255" key="1">
    <source>
        <dbReference type="HAMAP-Rule" id="MF_01433"/>
    </source>
</evidence>
<keyword id="KW-0106">Calcium</keyword>
<keyword id="KW-0326">Glycosidase</keyword>
<keyword id="KW-0378">Hydrolase</keyword>
<keyword id="KW-0479">Metal-binding</keyword>
<comment type="function">
    <text evidence="1">Hydrolyzes cytidine or uridine to ribose and cytosine or uracil, respectively. Has a clear preference for cytidine over uridine. Strictly specific for ribonucleosides.</text>
</comment>
<comment type="catalytic activity">
    <reaction evidence="1">
        <text>a pyrimidine ribonucleoside + H2O = a pyrimidine nucleobase + D-ribose</text>
        <dbReference type="Rhea" id="RHEA:56816"/>
        <dbReference type="ChEBI" id="CHEBI:15377"/>
        <dbReference type="ChEBI" id="CHEBI:26432"/>
        <dbReference type="ChEBI" id="CHEBI:47013"/>
        <dbReference type="ChEBI" id="CHEBI:141014"/>
        <dbReference type="EC" id="3.2.2.8"/>
    </reaction>
</comment>
<comment type="cofactor">
    <cofactor evidence="1">
        <name>Ca(2+)</name>
        <dbReference type="ChEBI" id="CHEBI:29108"/>
    </cofactor>
    <text evidence="1">Binds 1 Ca(2+) ion per monomer.</text>
</comment>
<comment type="subunit">
    <text evidence="1">Homotetramer.</text>
</comment>
<comment type="similarity">
    <text evidence="1">Belongs to the IUNH family. RihB subfamily.</text>
</comment>
<accession>C4ZU12</accession>
<proteinExistence type="inferred from homology"/>
<name>RIHB_ECOBW</name>
<dbReference type="EC" id="3.2.2.8" evidence="1"/>
<dbReference type="EMBL" id="CP001396">
    <property type="protein sequence ID" value="ACR65475.1"/>
    <property type="molecule type" value="Genomic_DNA"/>
</dbReference>
<dbReference type="RefSeq" id="WP_000415429.1">
    <property type="nucleotide sequence ID" value="NC_012759.1"/>
</dbReference>
<dbReference type="SMR" id="C4ZU12"/>
<dbReference type="KEGG" id="ebw:BWG_1944"/>
<dbReference type="HOGENOM" id="CLU_036838_2_0_6"/>
<dbReference type="GO" id="GO:0005829">
    <property type="term" value="C:cytosol"/>
    <property type="evidence" value="ECO:0007669"/>
    <property type="project" value="TreeGrafter"/>
</dbReference>
<dbReference type="GO" id="GO:0005509">
    <property type="term" value="F:calcium ion binding"/>
    <property type="evidence" value="ECO:0007669"/>
    <property type="project" value="UniProtKB-UniRule"/>
</dbReference>
<dbReference type="GO" id="GO:0008477">
    <property type="term" value="F:purine nucleosidase activity"/>
    <property type="evidence" value="ECO:0007669"/>
    <property type="project" value="TreeGrafter"/>
</dbReference>
<dbReference type="GO" id="GO:0045437">
    <property type="term" value="F:uridine nucleosidase activity"/>
    <property type="evidence" value="ECO:0007669"/>
    <property type="project" value="UniProtKB-ARBA"/>
</dbReference>
<dbReference type="GO" id="GO:0006152">
    <property type="term" value="P:purine nucleoside catabolic process"/>
    <property type="evidence" value="ECO:0007669"/>
    <property type="project" value="TreeGrafter"/>
</dbReference>
<dbReference type="GO" id="GO:0006206">
    <property type="term" value="P:pyrimidine nucleobase metabolic process"/>
    <property type="evidence" value="ECO:0007669"/>
    <property type="project" value="UniProtKB-UniRule"/>
</dbReference>
<dbReference type="GO" id="GO:0046133">
    <property type="term" value="P:pyrimidine ribonucleoside catabolic process"/>
    <property type="evidence" value="ECO:0007669"/>
    <property type="project" value="InterPro"/>
</dbReference>
<dbReference type="CDD" id="cd02651">
    <property type="entry name" value="nuc_hydro_IU_UC_XIUA"/>
    <property type="match status" value="1"/>
</dbReference>
<dbReference type="FunFam" id="3.90.245.10:FF:000003">
    <property type="entry name" value="Pyrimidine-specific ribonucleoside hydrolase RihB"/>
    <property type="match status" value="1"/>
</dbReference>
<dbReference type="Gene3D" id="3.90.245.10">
    <property type="entry name" value="Ribonucleoside hydrolase-like"/>
    <property type="match status" value="1"/>
</dbReference>
<dbReference type="HAMAP" id="MF_01433">
    <property type="entry name" value="Pyrim_hydro_RihB"/>
    <property type="match status" value="1"/>
</dbReference>
<dbReference type="InterPro" id="IPR015910">
    <property type="entry name" value="I/U_nuclsd_hydro_CS"/>
</dbReference>
<dbReference type="InterPro" id="IPR001910">
    <property type="entry name" value="Inosine/uridine_hydrolase_dom"/>
</dbReference>
<dbReference type="InterPro" id="IPR023186">
    <property type="entry name" value="IUNH"/>
</dbReference>
<dbReference type="InterPro" id="IPR022977">
    <property type="entry name" value="Pyrim_hydro_RihB"/>
</dbReference>
<dbReference type="InterPro" id="IPR036452">
    <property type="entry name" value="Ribo_hydro-like"/>
</dbReference>
<dbReference type="NCBIfam" id="NF007417">
    <property type="entry name" value="PRK09955.1"/>
    <property type="match status" value="1"/>
</dbReference>
<dbReference type="PANTHER" id="PTHR12304">
    <property type="entry name" value="INOSINE-URIDINE PREFERRING NUCLEOSIDE HYDROLASE"/>
    <property type="match status" value="1"/>
</dbReference>
<dbReference type="PANTHER" id="PTHR12304:SF4">
    <property type="entry name" value="URIDINE NUCLEOSIDASE"/>
    <property type="match status" value="1"/>
</dbReference>
<dbReference type="Pfam" id="PF01156">
    <property type="entry name" value="IU_nuc_hydro"/>
    <property type="match status" value="1"/>
</dbReference>
<dbReference type="SUPFAM" id="SSF53590">
    <property type="entry name" value="Nucleoside hydrolase"/>
    <property type="match status" value="1"/>
</dbReference>
<dbReference type="PROSITE" id="PS01247">
    <property type="entry name" value="IUNH"/>
    <property type="match status" value="1"/>
</dbReference>
<feature type="chain" id="PRO_1000215278" description="Pyrimidine-specific ribonucleoside hydrolase RihB">
    <location>
        <begin position="1"/>
        <end position="313"/>
    </location>
</feature>
<feature type="active site" description="Proton acceptor" evidence="1">
    <location>
        <position position="11"/>
    </location>
</feature>
<feature type="binding site" evidence="1">
    <location>
        <position position="11"/>
    </location>
    <ligand>
        <name>Ca(2+)</name>
        <dbReference type="ChEBI" id="CHEBI:29108"/>
    </ligand>
</feature>
<feature type="binding site" evidence="1">
    <location>
        <position position="16"/>
    </location>
    <ligand>
        <name>Ca(2+)</name>
        <dbReference type="ChEBI" id="CHEBI:29108"/>
    </ligand>
</feature>
<feature type="binding site" evidence="1">
    <location>
        <position position="124"/>
    </location>
    <ligand>
        <name>Ca(2+)</name>
        <dbReference type="ChEBI" id="CHEBI:29108"/>
    </ligand>
</feature>
<feature type="binding site" evidence="1">
    <location>
        <position position="227"/>
    </location>
    <ligand>
        <name>substrate</name>
    </ligand>
</feature>
<feature type="binding site" evidence="1">
    <location>
        <position position="239"/>
    </location>
    <ligand>
        <name>substrate</name>
    </ligand>
</feature>
<feature type="binding site" evidence="1">
    <location>
        <position position="240"/>
    </location>
    <ligand>
        <name>Ca(2+)</name>
        <dbReference type="ChEBI" id="CHEBI:29108"/>
    </ligand>
</feature>
<organism>
    <name type="scientific">Escherichia coli (strain K12 / MC4100 / BW2952)</name>
    <dbReference type="NCBI Taxonomy" id="595496"/>
    <lineage>
        <taxon>Bacteria</taxon>
        <taxon>Pseudomonadati</taxon>
        <taxon>Pseudomonadota</taxon>
        <taxon>Gammaproteobacteria</taxon>
        <taxon>Enterobacterales</taxon>
        <taxon>Enterobacteriaceae</taxon>
        <taxon>Escherichia</taxon>
    </lineage>
</organism>